<sequence length="605" mass="66575">MVLPKIFSYDIDERINLIQTITGKKPADIVISNVNLVLTPTGEILDNASIIISGKRIAGAGKYSELHRFIGKNTLVIDGENNYAMPGFIDPHIHIESSLLTPHGFAKLALRHGTTTVVADPHEIGNVLGSRGVEIFMDAARNLPLKILIDIPSCVPATDPKFGLETTANIIGADEVEKLAALEGTIGLGEVMDFVSVLNSNKSVLEKIRVAHRYRLIVNGHAPLLRGAELDAYIDAGIWSDHESTIYEEALEKARKGMYVFIREGSAWKDLKALLPLIKNHTIDHRFLSFASDDINVVDLMEKGHMDRIINIAIEYGVDPVKAIQLATIGPAMRIHLEDHVGVVGPARLADIVLSKNIEYIKPHTVIANGEIIYYKGELKKTFNNYKYPEETLNTVKLAKIPEPQEFIPKINTREGIVEANIIEVTPGSALTKHVIEELAVKNYNVLADPNRDIIYAAVIDRHKATGSMGKGFIKGLGFRAGAIAQTIAHDTHNLIVAGNNPEDMSRAVKRIVEIQGGIVVVDEGKIIGELPLRLAGLMSIEEPETVYEKYKKITNELNNGYGLEFESFFMTLALVALPVIPEIRLTDKGLVDVRKAKLIPLINK</sequence>
<accession>A3DLI4</accession>
<name>ADEC_STAMF</name>
<dbReference type="EC" id="3.5.4.2" evidence="1"/>
<dbReference type="EMBL" id="CP000575">
    <property type="protein sequence ID" value="ABN69494.1"/>
    <property type="molecule type" value="Genomic_DNA"/>
</dbReference>
<dbReference type="RefSeq" id="WP_011838685.1">
    <property type="nucleotide sequence ID" value="NC_009033.1"/>
</dbReference>
<dbReference type="SMR" id="A3DLI4"/>
<dbReference type="GeneID" id="4907710"/>
<dbReference type="KEGG" id="smr:Smar_0382"/>
<dbReference type="eggNOG" id="arCOG00693">
    <property type="taxonomic scope" value="Archaea"/>
</dbReference>
<dbReference type="HOGENOM" id="CLU_027935_0_0_2"/>
<dbReference type="OrthoDB" id="24954at2157"/>
<dbReference type="Proteomes" id="UP000000254">
    <property type="component" value="Chromosome"/>
</dbReference>
<dbReference type="GO" id="GO:0000034">
    <property type="term" value="F:adenine deaminase activity"/>
    <property type="evidence" value="ECO:0007669"/>
    <property type="project" value="UniProtKB-UniRule"/>
</dbReference>
<dbReference type="GO" id="GO:0006146">
    <property type="term" value="P:adenine catabolic process"/>
    <property type="evidence" value="ECO:0007669"/>
    <property type="project" value="InterPro"/>
</dbReference>
<dbReference type="CDD" id="cd01295">
    <property type="entry name" value="AdeC"/>
    <property type="match status" value="1"/>
</dbReference>
<dbReference type="Gene3D" id="3.20.20.140">
    <property type="entry name" value="Metal-dependent hydrolases"/>
    <property type="match status" value="1"/>
</dbReference>
<dbReference type="Gene3D" id="2.30.40.10">
    <property type="entry name" value="Urease, subunit C, domain 1"/>
    <property type="match status" value="1"/>
</dbReference>
<dbReference type="HAMAP" id="MF_01518">
    <property type="entry name" value="Adenine_deamin"/>
    <property type="match status" value="1"/>
</dbReference>
<dbReference type="InterPro" id="IPR006679">
    <property type="entry name" value="Adenine_deam"/>
</dbReference>
<dbReference type="InterPro" id="IPR026912">
    <property type="entry name" value="Adenine_deam_C"/>
</dbReference>
<dbReference type="InterPro" id="IPR006680">
    <property type="entry name" value="Amidohydro-rel"/>
</dbReference>
<dbReference type="InterPro" id="IPR011059">
    <property type="entry name" value="Metal-dep_hydrolase_composite"/>
</dbReference>
<dbReference type="InterPro" id="IPR032466">
    <property type="entry name" value="Metal_Hydrolase"/>
</dbReference>
<dbReference type="NCBIfam" id="TIGR01178">
    <property type="entry name" value="ade"/>
    <property type="match status" value="1"/>
</dbReference>
<dbReference type="PANTHER" id="PTHR11113:SF2">
    <property type="entry name" value="ADENINE DEAMINASE"/>
    <property type="match status" value="1"/>
</dbReference>
<dbReference type="PANTHER" id="PTHR11113">
    <property type="entry name" value="N-ACETYLGLUCOSAMINE-6-PHOSPHATE DEACETYLASE"/>
    <property type="match status" value="1"/>
</dbReference>
<dbReference type="Pfam" id="PF13382">
    <property type="entry name" value="Adenine_deam_C"/>
    <property type="match status" value="1"/>
</dbReference>
<dbReference type="Pfam" id="PF01979">
    <property type="entry name" value="Amidohydro_1"/>
    <property type="match status" value="1"/>
</dbReference>
<dbReference type="SUPFAM" id="SSF51338">
    <property type="entry name" value="Composite domain of metallo-dependent hydrolases"/>
    <property type="match status" value="1"/>
</dbReference>
<dbReference type="SUPFAM" id="SSF51556">
    <property type="entry name" value="Metallo-dependent hydrolases"/>
    <property type="match status" value="1"/>
</dbReference>
<organism>
    <name type="scientific">Staphylothermus marinus (strain ATCC 43588 / DSM 3639 / JCM 9404 / F1)</name>
    <dbReference type="NCBI Taxonomy" id="399550"/>
    <lineage>
        <taxon>Archaea</taxon>
        <taxon>Thermoproteota</taxon>
        <taxon>Thermoprotei</taxon>
        <taxon>Desulfurococcales</taxon>
        <taxon>Desulfurococcaceae</taxon>
        <taxon>Staphylothermus</taxon>
    </lineage>
</organism>
<comment type="catalytic activity">
    <reaction evidence="1">
        <text>adenine + H2O + H(+) = hypoxanthine + NH4(+)</text>
        <dbReference type="Rhea" id="RHEA:23688"/>
        <dbReference type="ChEBI" id="CHEBI:15377"/>
        <dbReference type="ChEBI" id="CHEBI:15378"/>
        <dbReference type="ChEBI" id="CHEBI:16708"/>
        <dbReference type="ChEBI" id="CHEBI:17368"/>
        <dbReference type="ChEBI" id="CHEBI:28938"/>
        <dbReference type="EC" id="3.5.4.2"/>
    </reaction>
</comment>
<comment type="cofactor">
    <cofactor evidence="1">
        <name>Mn(2+)</name>
        <dbReference type="ChEBI" id="CHEBI:29035"/>
    </cofactor>
</comment>
<comment type="similarity">
    <text evidence="1">Belongs to the metallo-dependent hydrolases superfamily. Adenine deaminase family.</text>
</comment>
<gene>
    <name evidence="1" type="primary">ade</name>
    <name type="ordered locus">Smar_0382</name>
</gene>
<reference key="1">
    <citation type="journal article" date="2009" name="BMC Genomics">
        <title>The complete genome sequence of Staphylothermus marinus reveals differences in sulfur metabolism among heterotrophic Crenarchaeota.</title>
        <authorList>
            <person name="Anderson I.J."/>
            <person name="Dharmarajan L."/>
            <person name="Rodriguez J."/>
            <person name="Hooper S."/>
            <person name="Porat I."/>
            <person name="Ulrich L.E."/>
            <person name="Elkins J.G."/>
            <person name="Mavromatis K."/>
            <person name="Sun H."/>
            <person name="Land M."/>
            <person name="Lapidus A."/>
            <person name="Lucas S."/>
            <person name="Barry K."/>
            <person name="Huber H."/>
            <person name="Zhulin I.B."/>
            <person name="Whitman W.B."/>
            <person name="Mukhopadhyay B."/>
            <person name="Woese C."/>
            <person name="Bristow J."/>
            <person name="Kyrpides N."/>
        </authorList>
    </citation>
    <scope>NUCLEOTIDE SEQUENCE [LARGE SCALE GENOMIC DNA]</scope>
    <source>
        <strain>ATCC 43588 / DSM 3639 / JCM 9404 / F1</strain>
    </source>
</reference>
<reference key="2">
    <citation type="journal article" date="2009" name="Stand. Genomic Sci.">
        <title>Complete genome sequence of Staphylothermus marinus Stetter and Fiala 1986 type strain F1.</title>
        <authorList>
            <person name="Anderson I.J."/>
            <person name="Sun H."/>
            <person name="Lapidus A."/>
            <person name="Copeland A."/>
            <person name="Glavina Del Rio T."/>
            <person name="Tice H."/>
            <person name="Dalin E."/>
            <person name="Lucas S."/>
            <person name="Barry K."/>
            <person name="Land M."/>
            <person name="Richardson P."/>
            <person name="Huber H."/>
            <person name="Kyrpides N.C."/>
        </authorList>
    </citation>
    <scope>NUCLEOTIDE SEQUENCE [LARGE SCALE GENOMIC DNA]</scope>
    <source>
        <strain>ATCC 43588 / DSM 3639 / JCM 9404 / F1</strain>
    </source>
</reference>
<keyword id="KW-0378">Hydrolase</keyword>
<keyword id="KW-0464">Manganese</keyword>
<keyword id="KW-1185">Reference proteome</keyword>
<feature type="chain" id="PRO_0000296737" description="Adenine deaminase">
    <location>
        <begin position="1"/>
        <end position="605"/>
    </location>
</feature>
<proteinExistence type="inferred from homology"/>
<evidence type="ECO:0000255" key="1">
    <source>
        <dbReference type="HAMAP-Rule" id="MF_01518"/>
    </source>
</evidence>
<protein>
    <recommendedName>
        <fullName evidence="1">Adenine deaminase</fullName>
        <shortName evidence="1">Adenase</shortName>
        <shortName evidence="1">Adenine aminase</shortName>
        <ecNumber evidence="1">3.5.4.2</ecNumber>
    </recommendedName>
</protein>